<keyword id="KW-0002">3D-structure</keyword>
<keyword id="KW-1064">Adaptive immunity</keyword>
<keyword id="KW-0025">Alternative splicing</keyword>
<keyword id="KW-0067">ATP-binding</keyword>
<keyword id="KW-0145">Chemotaxis</keyword>
<keyword id="KW-0963">Cytoplasm</keyword>
<keyword id="KW-0221">Differentiation</keyword>
<keyword id="KW-0903">Direct protein sequencing</keyword>
<keyword id="KW-0225">Disease variant</keyword>
<keyword id="KW-0391">Immunity</keyword>
<keyword id="KW-0395">Inflammatory response</keyword>
<keyword id="KW-0399">Innate immunity</keyword>
<keyword id="KW-0418">Kinase</keyword>
<keyword id="KW-0443">Lipid metabolism</keyword>
<keyword id="KW-0547">Nucleotide-binding</keyword>
<keyword id="KW-0597">Phosphoprotein</keyword>
<keyword id="KW-1267">Proteomics identification</keyword>
<keyword id="KW-1185">Reference proteome</keyword>
<keyword id="KW-0808">Transferase</keyword>
<protein>
    <recommendedName>
        <fullName>Phosphatidylinositol 4,5-bisphosphate 3-kinase catalytic subunit delta isoform</fullName>
        <shortName>PI3-kinase subunit delta</shortName>
        <shortName>PI3K-delta</shortName>
        <shortName>PI3Kdelta</shortName>
        <shortName>PtdIns-3-kinase subunit delta</shortName>
        <ecNumber evidence="16">2.7.1.137</ecNumber>
        <ecNumber evidence="9">2.7.1.153</ecNumber>
    </recommendedName>
    <alternativeName>
        <fullName>Phosphatidylinositol 4,5-bisphosphate 3-kinase 110 kDa catalytic subunit delta</fullName>
        <shortName>PtdIns-3-kinase subunit p110-delta</shortName>
        <shortName evidence="18">p110delta</shortName>
    </alternativeName>
</protein>
<reference key="1">
    <citation type="journal article" date="1997" name="Proc. Natl. Acad. Sci. U.S.A.">
        <title>P110delta, a novel phosphoinositide 3-kinase in leukocytes.</title>
        <authorList>
            <person name="Vanhaesebroeck B.A.M."/>
            <person name="Welham M.J."/>
            <person name="Kotani K."/>
            <person name="Stein R."/>
            <person name="Warne P.H."/>
            <person name="Zvelebil M.J."/>
            <person name="Higashi K."/>
            <person name="Volinia S."/>
            <person name="Downward J."/>
            <person name="Waterfield M.D."/>
        </authorList>
    </citation>
    <scope>NUCLEOTIDE SEQUENCE [MRNA] (ISOFORM 1)</scope>
</reference>
<reference key="2">
    <citation type="submission" date="2003-10" db="EMBL/GenBank/DDBJ databases">
        <authorList>
            <person name="Vanhaesebroeck B.A.M."/>
        </authorList>
    </citation>
    <scope>SEQUENCE REVISION TO 675</scope>
</reference>
<reference key="3">
    <citation type="journal article" date="1997" name="J. Biol. Chem.">
        <title>p110delta, a novel phosphatidylinositol 3-kinase catalytic subunit that associates with p85 and is expressed predominantly in leukocytes.</title>
        <authorList>
            <person name="Chantry D."/>
            <person name="Vojtek A."/>
            <person name="Kashishian A."/>
            <person name="Holtzman D.A."/>
            <person name="Wood C."/>
            <person name="Gray P.W."/>
            <person name="Cooper J.A."/>
            <person name="Hoekstra M.F."/>
        </authorList>
    </citation>
    <scope>NUCLEOTIDE SEQUENCE [MRNA] (ISOFORM 1)</scope>
    <scope>FUNCTION</scope>
    <scope>CATALYTIC ACTIVITY</scope>
    <scope>TISSUE SPECIFICITY</scope>
</reference>
<reference key="4">
    <citation type="journal article" date="2012" name="Oncogene">
        <title>p37delta is a new isoform of PI3K p110delta that increases cell proliferation and is overexpressed in tumors.</title>
        <authorList>
            <person name="Fransson S."/>
            <person name="Uv A."/>
            <person name="Eriksson H."/>
            <person name="Andersson M.K."/>
            <person name="Wettergren Y."/>
            <person name="Bergo M."/>
            <person name="Ejeskar K."/>
        </authorList>
    </citation>
    <scope>NUCLEOTIDE SEQUENCE [MRNA] (ISOFORM 2)</scope>
    <scope>FUNCTION</scope>
    <scope>SUBUNIT</scope>
    <scope>INTERACTION WITH HRAS</scope>
    <scope>SUBCELLULAR LOCATION</scope>
    <scope>TISSUE SPECIFICITY</scope>
    <source>
        <tissue>Peripheral blood leukocyte</tissue>
    </source>
</reference>
<reference key="5">
    <citation type="submission" date="2005-10" db="EMBL/GenBank/DDBJ databases">
        <title>Variations in the human phosphoinositide-3-kinase p110 gene in children with primary B-cell immunodeficiency of unknown etiology.</title>
        <authorList>
            <person name="Jou S.-T."/>
            <person name="Chien Y.-H."/>
            <person name="Yang Y.-H."/>
            <person name="Shyur S.-D."/>
            <person name="Chou C.-C."/>
            <person name="Chiang B.-L."/>
        </authorList>
    </citation>
    <scope>NUCLEOTIDE SEQUENCE [MRNA]</scope>
</reference>
<reference key="6">
    <citation type="journal article" date="2006" name="Nature">
        <title>The DNA sequence and biological annotation of human chromosome 1.</title>
        <authorList>
            <person name="Gregory S.G."/>
            <person name="Barlow K.F."/>
            <person name="McLay K.E."/>
            <person name="Kaul R."/>
            <person name="Swarbreck D."/>
            <person name="Dunham A."/>
            <person name="Scott C.E."/>
            <person name="Howe K.L."/>
            <person name="Woodfine K."/>
            <person name="Spencer C.C.A."/>
            <person name="Jones M.C."/>
            <person name="Gillson C."/>
            <person name="Searle S."/>
            <person name="Zhou Y."/>
            <person name="Kokocinski F."/>
            <person name="McDonald L."/>
            <person name="Evans R."/>
            <person name="Phillips K."/>
            <person name="Atkinson A."/>
            <person name="Cooper R."/>
            <person name="Jones C."/>
            <person name="Hall R.E."/>
            <person name="Andrews T.D."/>
            <person name="Lloyd C."/>
            <person name="Ainscough R."/>
            <person name="Almeida J.P."/>
            <person name="Ambrose K.D."/>
            <person name="Anderson F."/>
            <person name="Andrew R.W."/>
            <person name="Ashwell R.I.S."/>
            <person name="Aubin K."/>
            <person name="Babbage A.K."/>
            <person name="Bagguley C.L."/>
            <person name="Bailey J."/>
            <person name="Beasley H."/>
            <person name="Bethel G."/>
            <person name="Bird C.P."/>
            <person name="Bray-Allen S."/>
            <person name="Brown J.Y."/>
            <person name="Brown A.J."/>
            <person name="Buckley D."/>
            <person name="Burton J."/>
            <person name="Bye J."/>
            <person name="Carder C."/>
            <person name="Chapman J.C."/>
            <person name="Clark S.Y."/>
            <person name="Clarke G."/>
            <person name="Clee C."/>
            <person name="Cobley V."/>
            <person name="Collier R.E."/>
            <person name="Corby N."/>
            <person name="Coville G.J."/>
            <person name="Davies J."/>
            <person name="Deadman R."/>
            <person name="Dunn M."/>
            <person name="Earthrowl M."/>
            <person name="Ellington A.G."/>
            <person name="Errington H."/>
            <person name="Frankish A."/>
            <person name="Frankland J."/>
            <person name="French L."/>
            <person name="Garner P."/>
            <person name="Garnett J."/>
            <person name="Gay L."/>
            <person name="Ghori M.R.J."/>
            <person name="Gibson R."/>
            <person name="Gilby L.M."/>
            <person name="Gillett W."/>
            <person name="Glithero R.J."/>
            <person name="Grafham D.V."/>
            <person name="Griffiths C."/>
            <person name="Griffiths-Jones S."/>
            <person name="Grocock R."/>
            <person name="Hammond S."/>
            <person name="Harrison E.S.I."/>
            <person name="Hart E."/>
            <person name="Haugen E."/>
            <person name="Heath P.D."/>
            <person name="Holmes S."/>
            <person name="Holt K."/>
            <person name="Howden P.J."/>
            <person name="Hunt A.R."/>
            <person name="Hunt S.E."/>
            <person name="Hunter G."/>
            <person name="Isherwood J."/>
            <person name="James R."/>
            <person name="Johnson C."/>
            <person name="Johnson D."/>
            <person name="Joy A."/>
            <person name="Kay M."/>
            <person name="Kershaw J.K."/>
            <person name="Kibukawa M."/>
            <person name="Kimberley A.M."/>
            <person name="King A."/>
            <person name="Knights A.J."/>
            <person name="Lad H."/>
            <person name="Laird G."/>
            <person name="Lawlor S."/>
            <person name="Leongamornlert D.A."/>
            <person name="Lloyd D.M."/>
            <person name="Loveland J."/>
            <person name="Lovell J."/>
            <person name="Lush M.J."/>
            <person name="Lyne R."/>
            <person name="Martin S."/>
            <person name="Mashreghi-Mohammadi M."/>
            <person name="Matthews L."/>
            <person name="Matthews N.S.W."/>
            <person name="McLaren S."/>
            <person name="Milne S."/>
            <person name="Mistry S."/>
            <person name="Moore M.J.F."/>
            <person name="Nickerson T."/>
            <person name="O'Dell C.N."/>
            <person name="Oliver K."/>
            <person name="Palmeiri A."/>
            <person name="Palmer S.A."/>
            <person name="Parker A."/>
            <person name="Patel D."/>
            <person name="Pearce A.V."/>
            <person name="Peck A.I."/>
            <person name="Pelan S."/>
            <person name="Phelps K."/>
            <person name="Phillimore B.J."/>
            <person name="Plumb R."/>
            <person name="Rajan J."/>
            <person name="Raymond C."/>
            <person name="Rouse G."/>
            <person name="Saenphimmachak C."/>
            <person name="Sehra H.K."/>
            <person name="Sheridan E."/>
            <person name="Shownkeen R."/>
            <person name="Sims S."/>
            <person name="Skuce C.D."/>
            <person name="Smith M."/>
            <person name="Steward C."/>
            <person name="Subramanian S."/>
            <person name="Sycamore N."/>
            <person name="Tracey A."/>
            <person name="Tromans A."/>
            <person name="Van Helmond Z."/>
            <person name="Wall M."/>
            <person name="Wallis J.M."/>
            <person name="White S."/>
            <person name="Whitehead S.L."/>
            <person name="Wilkinson J.E."/>
            <person name="Willey D.L."/>
            <person name="Williams H."/>
            <person name="Wilming L."/>
            <person name="Wray P.W."/>
            <person name="Wu Z."/>
            <person name="Coulson A."/>
            <person name="Vaudin M."/>
            <person name="Sulston J.E."/>
            <person name="Durbin R.M."/>
            <person name="Hubbard T."/>
            <person name="Wooster R."/>
            <person name="Dunham I."/>
            <person name="Carter N.P."/>
            <person name="McVean G."/>
            <person name="Ross M.T."/>
            <person name="Harrow J."/>
            <person name="Olson M.V."/>
            <person name="Beck S."/>
            <person name="Rogers J."/>
            <person name="Bentley D.R."/>
        </authorList>
    </citation>
    <scope>NUCLEOTIDE SEQUENCE [LARGE SCALE GENOMIC DNA]</scope>
</reference>
<reference key="7">
    <citation type="journal article" date="2004" name="Genome Res.">
        <title>The status, quality, and expansion of the NIH full-length cDNA project: the Mammalian Gene Collection (MGC).</title>
        <authorList>
            <consortium name="The MGC Project Team"/>
        </authorList>
    </citation>
    <scope>NUCLEOTIDE SEQUENCE [LARGE SCALE MRNA] (ISOFORM 1)</scope>
</reference>
<reference key="8">
    <citation type="journal article" date="2004" name="Protein Expr. Purif.">
        <title>Cloning, expression, purification, and characterization of the human Class Ia phosphoinositide 3-kinase isoforms.</title>
        <authorList>
            <person name="Meier T.I."/>
            <person name="Cook J.A."/>
            <person name="Thomas J.E."/>
            <person name="Radding J.A."/>
            <person name="Horn C."/>
            <person name="Lingaraj T."/>
            <person name="Smith M.C."/>
        </authorList>
    </citation>
    <scope>FUNCTION</scope>
    <scope>CATALYTIC ACTIVITY</scope>
</reference>
<reference key="9">
    <citation type="journal article" date="1999" name="EMBO J.">
        <title>Autophosphorylation of p110 delta phosphoinositide 3-kinase: a new paradigm for the regulation of lipid kinases in vitro and in vivo.</title>
        <authorList>
            <person name="Vanhaesebroeck B."/>
            <person name="Higashi K."/>
            <person name="Raven C."/>
            <person name="Welham M."/>
            <person name="Anderson S."/>
            <person name="Brennan P."/>
            <person name="Ward S.G."/>
            <person name="Waterfield M.D."/>
        </authorList>
    </citation>
    <scope>PROTEIN SEQUENCE OF 1031-1040</scope>
    <scope>PHOSPHORYLATION AT SER-1039</scope>
    <scope>MUTAGENESIS OF ARG-894 AND SER-1039</scope>
</reference>
<reference key="10">
    <citation type="journal article" date="2009" name="Mol. Cell. Proteomics">
        <title>Large-scale proteomics analysis of the human kinome.</title>
        <authorList>
            <person name="Oppermann F.S."/>
            <person name="Gnad F."/>
            <person name="Olsen J.V."/>
            <person name="Hornberger R."/>
            <person name="Greff Z."/>
            <person name="Keri G."/>
            <person name="Mann M."/>
            <person name="Daub H."/>
        </authorList>
    </citation>
    <scope>PHOSPHORYLATION [LARGE SCALE ANALYSIS] AT TYR-524 AND SER-1039</scope>
    <scope>IDENTIFICATION BY MASS SPECTROMETRY [LARGE SCALE ANALYSIS]</scope>
</reference>
<reference key="11">
    <citation type="journal article" date="2010" name="Blood">
        <title>PI3K p110delta regulates T-cell cytokine production during primary and secondary immune responses in mice and humans.</title>
        <authorList>
            <person name="Soond D.R."/>
            <person name="Bjorgo E."/>
            <person name="Moltu K."/>
            <person name="Dale V.Q."/>
            <person name="Patton D.T."/>
            <person name="Torgersen K.M."/>
            <person name="Galleway F."/>
            <person name="Twomey B."/>
            <person name="Clark J."/>
            <person name="Gaston J.S.H."/>
            <person name="Tasken K."/>
            <person name="Bunyard P."/>
            <person name="Okkenhaug K."/>
        </authorList>
    </citation>
    <scope>FUNCTION IN T-CELLS</scope>
    <scope>ACTIVITY REGULATION</scope>
</reference>
<reference key="12">
    <citation type="journal article" date="2007" name="Nat. Rev. Immunol.">
        <title>PI3K delta and PI3K gamma: partners in crime in inflammation in rheumatoid arthritis and beyond?</title>
        <authorList>
            <person name="Rommel C."/>
            <person name="Camps M."/>
            <person name="Ji H."/>
        </authorList>
    </citation>
    <scope>REVIEW ON FUNCTION</scope>
</reference>
<reference key="13">
    <citation type="journal article" date="2011" name="Cell. Signal.">
        <title>Phosphoinositide 3-kinase delta (PI3Kdelta) in leukocyte signaling and function.</title>
        <authorList>
            <person name="Fung-Leung W.-P."/>
        </authorList>
    </citation>
    <scope>REVIEW ON FUNCTION</scope>
</reference>
<reference key="14">
    <citation type="journal article" date="2013" name="J. Proteome Res.">
        <title>Toward a comprehensive characterization of a human cancer cell phosphoproteome.</title>
        <authorList>
            <person name="Zhou H."/>
            <person name="Di Palma S."/>
            <person name="Preisinger C."/>
            <person name="Peng M."/>
            <person name="Polat A.N."/>
            <person name="Heck A.J."/>
            <person name="Mohammed S."/>
        </authorList>
    </citation>
    <scope>PHOSPHORYLATION [LARGE SCALE ANALYSIS] AT SER-1039</scope>
    <scope>IDENTIFICATION BY MASS SPECTROMETRY [LARGE SCALE ANALYSIS]</scope>
    <source>
        <tissue>Erythroleukemia</tissue>
    </source>
</reference>
<reference key="15">
    <citation type="journal article" date="2013" name="Science">
        <title>Phosphoinositide 3-kinase delta gene mutation predisposes to respiratory infection and airway damage.</title>
        <authorList>
            <person name="Angulo I."/>
            <person name="Vadas O."/>
            <person name="Garcon F."/>
            <person name="Banham-Hall E."/>
            <person name="Plagnol V."/>
            <person name="Leahy T.R."/>
            <person name="Baxendale H."/>
            <person name="Coulter T."/>
            <person name="Curtis J."/>
            <person name="Wu C."/>
            <person name="Blake-Palmer K."/>
            <person name="Perisic O."/>
            <person name="Smyth D."/>
            <person name="Maes M."/>
            <person name="Fiddler C."/>
            <person name="Juss J."/>
            <person name="Cilliers D."/>
            <person name="Markelj G."/>
            <person name="Chandra A."/>
            <person name="Farmer G."/>
            <person name="Kielkowska A."/>
            <person name="Clark J."/>
            <person name="Kracker S."/>
            <person name="Debre M."/>
            <person name="Picard C."/>
            <person name="Pellier I."/>
            <person name="Jabado N."/>
            <person name="Morris J.A."/>
            <person name="Barcenas-Morales G."/>
            <person name="Fischer A."/>
            <person name="Stephens L."/>
            <person name="Hawkins P."/>
            <person name="Barrett J.C."/>
            <person name="Abinun M."/>
            <person name="Clatworthy M."/>
            <person name="Durandy A."/>
            <person name="Doffinger R."/>
            <person name="Chilvers E.R."/>
            <person name="Cant A.J."/>
            <person name="Kumararatne D."/>
            <person name="Okkenhaug K."/>
            <person name="Williams R.L."/>
            <person name="Condliffe A."/>
            <person name="Nejentsev S."/>
        </authorList>
    </citation>
    <scope>INVOLVEMENT IN IMD14A</scope>
    <scope>VARIANT IMD14A LYS-1021</scope>
    <scope>CHARACTERIZATION OF VARIANT IMD14A LYS-1021</scope>
</reference>
<reference key="16">
    <citation type="journal article" date="2018" name="J. Allergy Clin. Immunol.">
        <title>Dual loss of p110delta PI3-kinase and SKAP (KNSTRN) expression leads to combined immunodeficiency and multisystem syndromic features.</title>
        <authorList>
            <person name="Sharfe N."/>
            <person name="Karanxha A."/>
            <person name="Dadi H."/>
            <person name="Merico D."/>
            <person name="Chitayat D."/>
            <person name="Herbrick J.A."/>
            <person name="Freeman S."/>
            <person name="Grinstein S."/>
            <person name="Roifman C.M."/>
        </authorList>
    </citation>
    <scope>INVOLVEMENT IN ROCHIS</scope>
    <scope>VARIANT ROCHIS 721-GLN--GLN-1044 DEL</scope>
    <scope>CHARACTERIZATION OF VARIANT ROCHIS 721-GLN--GLN-1044 DEL</scope>
</reference>
<reference key="17">
    <citation type="journal article" date="2018" name="J. Allergy Clin. Immunol.">
        <title>Primary immunodeficiency disorder caused by phosphoinositide 3-kinase delta deficiency.</title>
        <authorList>
            <person name="Sogkas G."/>
            <person name="Fedchenko M."/>
            <person name="Dhingra A."/>
            <person name="Jablonka A."/>
            <person name="Schmidt R.E."/>
            <person name="Atschekzei F."/>
        </authorList>
    </citation>
    <scope>INVOLVEMENT IN IMD14B</scope>
</reference>
<reference key="18">
    <citation type="journal article" date="2019" name="J. Allergy Clin. Immunol.">
        <title>Human primary immunodeficiency caused by expression of a kinase-dead p110delta mutant.</title>
        <authorList>
            <person name="Cohen S.B."/>
            <person name="Bainter W."/>
            <person name="Johnson J.L."/>
            <person name="Lin T.Y."/>
            <person name="Wong J.C.Y."/>
            <person name="Wallace J.G."/>
            <person name="Jones J."/>
            <person name="Qureshi S."/>
            <person name="Mir F."/>
            <person name="Qamar F."/>
            <person name="Cantley L.C."/>
            <person name="Geha R.S."/>
            <person name="Chou J."/>
        </authorList>
    </citation>
    <scope>INVOLVEMENT IN IMD14B</scope>
</reference>
<comment type="function">
    <text evidence="9 10 11 16">Phosphoinositide-3-kinase (PI3K) phosphorylates phosphatidylinositol (PI) and its phosphorylated derivatives at position 3 of the inositol ring to produce 3-phosphoinositides (PubMed:9235916). Uses ATP and PtdIns(4,5)P2 (phosphatidylinositol 4,5-bisphosphate) to generate phosphatidylinositol 3,4,5-trisphosphate (PIP3) (PubMed:15135396). PIP3 plays a key role by recruiting PH domain-containing proteins to the membrane, including AKT1 and PDPK1, activating signaling cascades involved in cell growth, survival, proliferation, motility and morphology. Mediates immune responses. Plays a role in B-cell development, proliferation, migration, and function. Required for B-cell receptor (BCR) signaling. Mediates B-cell proliferation response to anti-IgM, anti-CD40 and IL4 stimulation. Promotes cytokine production in response to TLR4 and TLR9. Required for antibody class switch mediated by TLR9. Involved in the antigen presentation function of B-cells. Involved in B-cell chemotaxis in response to CXCL13 and sphingosine 1-phosphate (S1P). Required for proliferation, signaling and cytokine production of naive, effector and memory T-cells. Required for T-cell receptor (TCR) signaling. Mediates TCR signaling events at the immune synapse. Activation by TCR leads to antigen-dependent memory T-cell migration and retention to antigenic tissues. Together with PIK3CG participates in T-cell development. Contributes to T-helper cell expansion and differentiation. Required for T-cell migration mediated by homing receptors SELL/CD62L, CCR7 and S1PR1 and antigen dependent recruitment of T-cells. Together with PIK3CG is involved in natural killer (NK) cell development and migration towards the sites of inflammation. Participates in NK cell receptor activation. Plays a role in NK cell maturation and cytokine production. Together with PIK3CG is involved in neutrophil chemotaxis and extravasation. Together with PIK3CG participates in neutrophil respiratory burst. Plays important roles in mast-cell development and mast cell mediated allergic response. Involved in stem cell factor (SCF)-mediated proliferation, adhesion and migration. Required for allergen-IgE-induced degranulation and cytokine release. The lipid kinase activity is required for its biological function. Isoform 2 may be involved in stabilizing total RAS levels, resulting in increased ERK phosphorylation and increased PI3K activity.</text>
</comment>
<comment type="catalytic activity">
    <reaction evidence="9">
        <text>a 1,2-diacyl-sn-glycero-3-phospho-(1D-myo-inositol-4,5-bisphosphate) + ATP = a 1,2-diacyl-sn-glycero-3-phospho-(1D-myo-inositol-3,4,5-trisphosphate) + ADP + H(+)</text>
        <dbReference type="Rhea" id="RHEA:21292"/>
        <dbReference type="ChEBI" id="CHEBI:15378"/>
        <dbReference type="ChEBI" id="CHEBI:30616"/>
        <dbReference type="ChEBI" id="CHEBI:57836"/>
        <dbReference type="ChEBI" id="CHEBI:58456"/>
        <dbReference type="ChEBI" id="CHEBI:456216"/>
        <dbReference type="EC" id="2.7.1.153"/>
    </reaction>
    <physiologicalReaction direction="left-to-right" evidence="20">
        <dbReference type="Rhea" id="RHEA:21293"/>
    </physiologicalReaction>
</comment>
<comment type="catalytic activity">
    <reaction evidence="16">
        <text>a 1,2-diacyl-sn-glycero-3-phospho-(1D-myo-inositol) + ATP = a 1,2-diacyl-sn-glycero-3-phospho-(1D-myo-inositol-3-phosphate) + ADP + H(+)</text>
        <dbReference type="Rhea" id="RHEA:12709"/>
        <dbReference type="ChEBI" id="CHEBI:15378"/>
        <dbReference type="ChEBI" id="CHEBI:30616"/>
        <dbReference type="ChEBI" id="CHEBI:57880"/>
        <dbReference type="ChEBI" id="CHEBI:58088"/>
        <dbReference type="ChEBI" id="CHEBI:456216"/>
        <dbReference type="EC" id="2.7.1.137"/>
    </reaction>
    <physiologicalReaction direction="left-to-right" evidence="22">
        <dbReference type="Rhea" id="RHEA:12710"/>
    </physiologicalReaction>
</comment>
<comment type="catalytic activity">
    <reaction evidence="20">
        <text>1-octadecanoyl-2-(5Z,8Z,11Z,14Z)-eicosatetraenoyl-sn-glycero-3-phospho-1D-myo-inositol 4,5-bisphosphate + ATP = 1-octadecanoyl-2-(5Z,8Z,11Z,14Z-eicosatetraenoyl)-sn-glycero-3-phospho-(1D-myo-inositol 3,4,5-triphosphate) + ADP + H(+)</text>
        <dbReference type="Rhea" id="RHEA:43396"/>
        <dbReference type="ChEBI" id="CHEBI:15378"/>
        <dbReference type="ChEBI" id="CHEBI:30616"/>
        <dbReference type="ChEBI" id="CHEBI:77137"/>
        <dbReference type="ChEBI" id="CHEBI:83243"/>
        <dbReference type="ChEBI" id="CHEBI:456216"/>
    </reaction>
    <physiologicalReaction direction="left-to-right" evidence="20">
        <dbReference type="Rhea" id="RHEA:43397"/>
    </physiologicalReaction>
</comment>
<comment type="activity regulation">
    <text evidence="10">Activated by growth factors and cytokine receptors through a tyrosine-kinase-dependent mechanism. Activated by RAS. IC87114 inhibits lipid kinase activity and is selective in cells at doses up to 5-10 uM. IC87114 blocks T-cell receptor signaling in naive and memory T-cells and reduces cytokine production by memory T-cells.</text>
</comment>
<comment type="pathway">
    <text evidence="20 21">Phospholipid metabolism; phosphatidylinositol phosphate biosynthesis.</text>
</comment>
<comment type="subunit">
    <text evidence="1 11">Heterodimer of a catalytic subunit PIK3CD and a p85 regulatory subunit (PIK3R1, PIK3R2 or PIK3R3). Interacts with ERAS (By similarity). Interacts with HRAS.</text>
</comment>
<comment type="interaction">
    <interactant intactId="EBI-718309">
        <id>O00329</id>
    </interactant>
    <interactant intactId="EBI-350145">
        <id>P01112</id>
        <label>HRAS</label>
    </interactant>
    <organismsDiffer>false</organismsDiffer>
    <experiments>2</experiments>
</comment>
<comment type="interaction">
    <interactant intactId="EBI-718309">
        <id>O00329</id>
    </interactant>
    <interactant intactId="EBI-79464">
        <id>P27986</id>
        <label>PIK3R1</label>
    </interactant>
    <organismsDiffer>false</organismsDiffer>
    <experiments>9</experiments>
</comment>
<comment type="interaction">
    <interactant intactId="EBI-718309">
        <id>O00329</id>
    </interactant>
    <interactant intactId="EBI-9090282">
        <id>P27986-2</id>
        <label>PIK3R1</label>
    </interactant>
    <organismsDiffer>false</organismsDiffer>
    <experiments>3</experiments>
</comment>
<comment type="interaction">
    <interactant intactId="EBI-718309">
        <id>O00329</id>
    </interactant>
    <interactant intactId="EBI-79893">
        <id>Q92569</id>
        <label>PIK3R3</label>
    </interactant>
    <organismsDiffer>false</organismsDiffer>
    <experiments>6</experiments>
</comment>
<comment type="interaction">
    <interactant intactId="EBI-6470902">
        <id>O00329-2</id>
    </interactant>
    <interactant intactId="EBI-350145">
        <id>P01112</id>
        <label>HRAS</label>
    </interactant>
    <organismsDiffer>false</organismsDiffer>
    <experiments>2</experiments>
</comment>
<comment type="subcellular location">
    <subcellularLocation>
        <location evidence="11">Cytoplasm</location>
    </subcellularLocation>
</comment>
<comment type="alternative products">
    <event type="alternative splicing"/>
    <isoform>
        <id>O00329-1</id>
        <name>1</name>
        <name>p110-delta</name>
        <sequence type="displayed"/>
    </isoform>
    <isoform>
        <id>O00329-2</id>
        <name>2</name>
        <name>p37-delta</name>
        <sequence type="described" ref="VSP_044409 VSP_044410"/>
    </isoform>
</comment>
<comment type="tissue specificity">
    <text evidence="11 16">In humans, the highest levels of expression are seen in peripheral blood mononuclear cells, spleen, and thymus, and low levels of expression in testes, uterus, colon, and small intestine but not in other tissues examined including prostate, heart, brain, and liver (PubMed:9235916). Isoform 2 is expressed in normal thymus, lung and spleen tissues, and is detected at low levels in normal lysates from colon and ovarian biopsies, at elevated levels in lysates from colorectal tumors and is abundantly expressed in some ovarian tumors (at protein level). Both isoform 1 and isoform 2 are widely expressed. Isoform 1 is expressed predominantly in leukocytes.</text>
</comment>
<comment type="PTM">
    <text evidence="8">Autophosphorylation on Ser-1039 results in the almost complete inactivation of the lipid kinase activity.</text>
</comment>
<comment type="disease" evidence="12">
    <disease id="DI-03995">
        <name>Immunodeficiency 14A with lymphoproliferation, autosomal dominant</name>
        <acronym>IMD14A</acronym>
        <description>A disorder characterized by recurrent respiratory infections, progressive airway damage, lymphopenia, increased circulating transitional B cells, increased immunoglobulin M, reduced immunoglobulin G2 levels in serum, and impaired vaccine responses.</description>
        <dbReference type="MIM" id="615513"/>
    </disease>
    <text>The disease is caused by variants affecting the gene represented in this entry.</text>
</comment>
<comment type="disease" evidence="14 15">
    <disease id="DI-06085">
        <name>Immunodeficiency 14B, autosomal recessive</name>
        <acronym>IMD14B</acronym>
        <description>An autosomal recessive, primary immunodeficiency characterized by recurrent sinopulmonary infections apparent in early childhood. Some patients may develop inflammatory bowel disease or osteomyelitis. Immunological features include hypogammaglobulinemia, decreased levels of B cells, and evidence of impaired immune-mediated cytotoxicity and defective T-cell function.</description>
        <dbReference type="MIM" id="619281"/>
    </disease>
    <text>The disease is caused by variants affecting the gene represented in this entry.</text>
</comment>
<comment type="disease" evidence="13">
    <disease id="DI-06090">
        <name>Roifman-Chitayat syndrome</name>
        <acronym>ROCHIS</acronym>
        <description>An autosomal recessive digenic disorder characterized by global developmental delay, variable neurologic features such as seizures and ataxia, optic atrophy, dysmorphic facial features, distal skeletal anomalies, and recurrent invasive infections due to combined immunodeficiency.</description>
        <dbReference type="MIM" id="613328"/>
    </disease>
    <text evidence="13">The disease is caused by variants affecting distinct genetic loci, including the gene represented in this entry. Caused by the simultaneous occurrence of homozygous mutations in PIK3CD and KNSTRN.</text>
</comment>
<comment type="miscellaneous">
    <text>IC87114 inhibitor reduces passive cutaneous anaphylaxis, attenuates allergic airway inflammation and hyperresponsiveness and allergen induced rhinitis response. Inhibitors may have therapeutic potential for the treatment of immune system-mediated diseases such as auto-immune diseases, inflammation and allergy (PubMed:17290298, PubMed:20940048).</text>
</comment>
<comment type="similarity">
    <text evidence="3 5 6">Belongs to the PI3/PI4-kinase family.</text>
</comment>
<comment type="online information" name="Atlas of Genetics and Cytogenetics in Oncology and Haematology">
    <link uri="https://atlasgeneticsoncology.org/gene/46261/PIK3CD"/>
</comment>
<organism>
    <name type="scientific">Homo sapiens</name>
    <name type="common">Human</name>
    <dbReference type="NCBI Taxonomy" id="9606"/>
    <lineage>
        <taxon>Eukaryota</taxon>
        <taxon>Metazoa</taxon>
        <taxon>Chordata</taxon>
        <taxon>Craniata</taxon>
        <taxon>Vertebrata</taxon>
        <taxon>Euteleostomi</taxon>
        <taxon>Mammalia</taxon>
        <taxon>Eutheria</taxon>
        <taxon>Euarchontoglires</taxon>
        <taxon>Primates</taxon>
        <taxon>Haplorrhini</taxon>
        <taxon>Catarrhini</taxon>
        <taxon>Hominidae</taxon>
        <taxon>Homo</taxon>
    </lineage>
</organism>
<name>PK3CD_HUMAN</name>
<sequence length="1044" mass="119479">MPPGVDCPMEFWTKEENQSVVVDFLLPTGVYLNFPVSRNANLSTIKQLLWHRAQYEPLFHMLSGPEAYVFTCINQTAEQQELEDEQRRLCDVQPFLPVLRLVAREGDRVKKLINSQISLLIGKGLHEFDSLCDPEVNDFRAKMCQFCEEAAARRQQLGWEAWLQYSFPLQLEPSAQTWGPGTLRLPNRALLVNVKFEGSEESFTFQVSTKDVPLALMACALRKKATVFRQPLVEQPEDYTLQVNGRHEYLYGSYPLCQFQYICSCLHSGLTPHLTMVHSSSILAMRDEQSNPAPQVQKPRAKPPPIPAKKPSSVSLWSLEQPFRIELIQGSKVNADERMKLVVQAGLFHGNEMLCKTVSSSEVSVCSEPVWKQRLEFDINICDLPRMARLCFALYAVIEKAKKARSTKKKSKKADCPIAWANLMLFDYKDQLKTGERCLYMWPSVPDEKGELLNPTGTVRSNPNTDSAAALLICLPEVAPHPVYYPALEKILELGRHSECVHVTEEEQLQLREILERRGSGELYEHEKDLVWKLRHEVQEHFPEALARLLLVTKWNKHEDVAQMLYLLCSWPELPVLSALELLDFSFPDCHVGSFAIKSLRKLTDDELFQYLLQLVQVLKYESYLDCELTKFLLDRALANRKIGHFLFWHLRSEMHVPSVALRFGLILEAYCRGSTHHMKVLMKQGEALSKLKALNDFVKLSSQKTPKPQTKELMHLCMRQEAYLEALSHLQSPLDPSTLLAEVCVEQCTFMDSKMKPLWIMYSNEEAGSGGSVGIIFKNGDDLRQDMLTLQMIQLMDVLWKQEGLDLRMTPYGCLPTGDRTGLIEVVLRSDTIANIQLNKSNMAATAAFNKDALLNWLKSKNPGEALDRAIEEFTLSCAGYCVATYVLGIGDRHSDNIMIRESGQLFHIDFGHFLGNFKTKFGINRERVPFILTYDFVHVIQQGKTNNSEKFERFRGYCERAYTILRRHGLLFLHLFALMRAAGLPELSCSKDIQYLKDSLALGKTEEEALKHFRVKFNEALRESWKTKVNWLAHNVSKDNRQ</sequence>
<evidence type="ECO:0000250" key="1"/>
<evidence type="ECO:0000255" key="2">
    <source>
        <dbReference type="PROSITE-ProRule" id="PRU00269"/>
    </source>
</evidence>
<evidence type="ECO:0000255" key="3">
    <source>
        <dbReference type="PROSITE-ProRule" id="PRU00877"/>
    </source>
</evidence>
<evidence type="ECO:0000255" key="4">
    <source>
        <dbReference type="PROSITE-ProRule" id="PRU00878"/>
    </source>
</evidence>
<evidence type="ECO:0000255" key="5">
    <source>
        <dbReference type="PROSITE-ProRule" id="PRU00879"/>
    </source>
</evidence>
<evidence type="ECO:0000255" key="6">
    <source>
        <dbReference type="PROSITE-ProRule" id="PRU00880"/>
    </source>
</evidence>
<evidence type="ECO:0000256" key="7">
    <source>
        <dbReference type="SAM" id="MobiDB-lite"/>
    </source>
</evidence>
<evidence type="ECO:0000269" key="8">
    <source>
    </source>
</evidence>
<evidence type="ECO:0000269" key="9">
    <source>
    </source>
</evidence>
<evidence type="ECO:0000269" key="10">
    <source>
    </source>
</evidence>
<evidence type="ECO:0000269" key="11">
    <source>
    </source>
</evidence>
<evidence type="ECO:0000269" key="12">
    <source>
    </source>
</evidence>
<evidence type="ECO:0000269" key="13">
    <source>
    </source>
</evidence>
<evidence type="ECO:0000269" key="14">
    <source>
    </source>
</evidence>
<evidence type="ECO:0000269" key="15">
    <source>
    </source>
</evidence>
<evidence type="ECO:0000269" key="16">
    <source>
    </source>
</evidence>
<evidence type="ECO:0000303" key="17">
    <source>
    </source>
</evidence>
<evidence type="ECO:0000303" key="18">
    <source>
    </source>
</evidence>
<evidence type="ECO:0000305" key="19"/>
<evidence type="ECO:0000305" key="20">
    <source>
    </source>
</evidence>
<evidence type="ECO:0000305" key="21">
    <source>
    </source>
</evidence>
<evidence type="ECO:0000305" key="22">
    <source>
    </source>
</evidence>
<evidence type="ECO:0007744" key="23">
    <source>
    </source>
</evidence>
<evidence type="ECO:0007744" key="24">
    <source>
    </source>
</evidence>
<evidence type="ECO:0007829" key="25">
    <source>
        <dbReference type="PDB" id="5M6U"/>
    </source>
</evidence>
<evidence type="ECO:0007829" key="26">
    <source>
        <dbReference type="PDB" id="5VLR"/>
    </source>
</evidence>
<evidence type="ECO:0007829" key="27">
    <source>
        <dbReference type="PDB" id="6OCO"/>
    </source>
</evidence>
<evidence type="ECO:0007829" key="28">
    <source>
        <dbReference type="PDB" id="6OCU"/>
    </source>
</evidence>
<evidence type="ECO:0007829" key="29">
    <source>
        <dbReference type="PDB" id="6PYR"/>
    </source>
</evidence>
<evidence type="ECO:0007829" key="30">
    <source>
        <dbReference type="PDB" id="6PYU"/>
    </source>
</evidence>
<evidence type="ECO:0007829" key="31">
    <source>
        <dbReference type="PDB" id="7JIS"/>
    </source>
</evidence>
<evidence type="ECO:0007829" key="32">
    <source>
        <dbReference type="PDB" id="7LM2"/>
    </source>
</evidence>
<evidence type="ECO:0007829" key="33">
    <source>
        <dbReference type="PDB" id="7LQ1"/>
    </source>
</evidence>
<evidence type="ECO:0007829" key="34">
    <source>
        <dbReference type="PDB" id="8BCY"/>
    </source>
</evidence>
<feature type="chain" id="PRO_0000088790" description="Phosphatidylinositol 4,5-bisphosphate 3-kinase catalytic subunit delta isoform">
    <location>
        <begin position="1"/>
        <end position="1044"/>
    </location>
</feature>
<feature type="domain" description="PI3K-ABD" evidence="3">
    <location>
        <begin position="16"/>
        <end position="105"/>
    </location>
</feature>
<feature type="domain" description="PI3K-RBD" evidence="5">
    <location>
        <begin position="187"/>
        <end position="278"/>
    </location>
</feature>
<feature type="domain" description="C2 PI3K-type" evidence="6">
    <location>
        <begin position="319"/>
        <end position="476"/>
    </location>
</feature>
<feature type="domain" description="PIK helical" evidence="4">
    <location>
        <begin position="497"/>
        <end position="674"/>
    </location>
</feature>
<feature type="domain" description="PI3K/PI4K catalytic" evidence="2">
    <location>
        <begin position="745"/>
        <end position="1027"/>
    </location>
</feature>
<feature type="region of interest" description="Disordered" evidence="7">
    <location>
        <begin position="287"/>
        <end position="312"/>
    </location>
</feature>
<feature type="region of interest" description="G-loop" evidence="2">
    <location>
        <begin position="751"/>
        <end position="757"/>
    </location>
</feature>
<feature type="region of interest" description="Catalytic loop" evidence="2">
    <location>
        <begin position="890"/>
        <end position="898"/>
    </location>
</feature>
<feature type="region of interest" description="Activation loop" evidence="2">
    <location>
        <begin position="909"/>
        <end position="935"/>
    </location>
</feature>
<feature type="modified residue" description="Phosphotyrosine" evidence="23">
    <location>
        <position position="524"/>
    </location>
</feature>
<feature type="modified residue" description="Phosphoserine; by autocatalysis" evidence="8 23 24">
    <location>
        <position position="1039"/>
    </location>
</feature>
<feature type="splice variant" id="VSP_044409" description="In isoform 2." evidence="17">
    <original>ESFTFQVSTKDVPLALMACALRKKATVFRQPLVEQPEDYTLQVNGRHEYLYGSYPLCQFQYICSCLHSGLTPHLTMVHSSSILAMRDEQSNPAPQVQKPR</original>
    <variation>VSPCVACGIQAALSMGSTSSVKLLSHPQAPLPQWHQMVFARCLCMCGAQLNVPPGELHLPGVHQGRAAGADGLCPAEEGHSVPAAAGGAAGRLHAAGERQ</variation>
    <location>
        <begin position="201"/>
        <end position="300"/>
    </location>
</feature>
<feature type="splice variant" id="VSP_044410" description="In isoform 2." evidence="17">
    <location>
        <begin position="302"/>
        <end position="1044"/>
    </location>
</feature>
<feature type="sequence variant" id="VAR_085590" description="In ROCHIS; no protein can be detected by Western blot in patient cells." evidence="13">
    <location>
        <begin position="721"/>
        <end position="1044"/>
    </location>
</feature>
<feature type="sequence variant" id="VAR_070918" description="In IMD14A; results in gain of function causing enhanced membrane association and kinase activity; dbSNP:rs397518423." evidence="12">
    <original>E</original>
    <variation>K</variation>
    <location>
        <position position="1021"/>
    </location>
</feature>
<feature type="mutagenesis site" description="Abolishes lipid and protein kinase activities." evidence="8">
    <original>R</original>
    <variation>P</variation>
    <location>
        <position position="894"/>
    </location>
</feature>
<feature type="mutagenesis site" description="Abolishes autophosphorylation, no effect on lipid kinase activity." evidence="8">
    <original>S</original>
    <variation>A</variation>
    <location>
        <position position="1039"/>
    </location>
</feature>
<feature type="mutagenesis site" description="Abolishes autophosphorylation, reduced lipid kinase activity." evidence="8">
    <original>S</original>
    <variation>D</variation>
    <variation>E</variation>
    <location>
        <position position="1039"/>
    </location>
</feature>
<feature type="sequence conflict" description="In Ref. 3; AAC25677." evidence="19" ref="3">
    <original>S</original>
    <variation>N</variation>
    <location>
        <position position="253"/>
    </location>
</feature>
<feature type="turn" evidence="32">
    <location>
        <begin position="13"/>
        <end position="15"/>
    </location>
</feature>
<feature type="strand" evidence="29">
    <location>
        <begin position="19"/>
        <end position="25"/>
    </location>
</feature>
<feature type="strand" evidence="29">
    <location>
        <begin position="31"/>
        <end position="37"/>
    </location>
</feature>
<feature type="helix" evidence="29">
    <location>
        <begin position="42"/>
        <end position="53"/>
    </location>
</feature>
<feature type="helix" evidence="29">
    <location>
        <begin position="59"/>
        <end position="61"/>
    </location>
</feature>
<feature type="helix" evidence="29">
    <location>
        <begin position="65"/>
        <end position="67"/>
    </location>
</feature>
<feature type="strand" evidence="29">
    <location>
        <begin position="68"/>
        <end position="74"/>
    </location>
</feature>
<feature type="strand" evidence="29">
    <location>
        <begin position="79"/>
        <end position="81"/>
    </location>
</feature>
<feature type="strand" evidence="27">
    <location>
        <begin position="86"/>
        <end position="88"/>
    </location>
</feature>
<feature type="helix" evidence="29">
    <location>
        <begin position="89"/>
        <end position="92"/>
    </location>
</feature>
<feature type="strand" evidence="29">
    <location>
        <begin position="94"/>
        <end position="103"/>
    </location>
</feature>
<feature type="helix" evidence="29">
    <location>
        <begin position="108"/>
        <end position="120"/>
    </location>
</feature>
<feature type="strand" evidence="34">
    <location>
        <begin position="121"/>
        <end position="123"/>
    </location>
</feature>
<feature type="helix" evidence="29">
    <location>
        <begin position="126"/>
        <end position="129"/>
    </location>
</feature>
<feature type="helix" evidence="29">
    <location>
        <begin position="134"/>
        <end position="155"/>
    </location>
</feature>
<feature type="helix" evidence="29">
    <location>
        <begin position="159"/>
        <end position="166"/>
    </location>
</feature>
<feature type="strand" evidence="29">
    <location>
        <begin position="189"/>
        <end position="196"/>
    </location>
</feature>
<feature type="strand" evidence="29">
    <location>
        <begin position="202"/>
        <end position="208"/>
    </location>
</feature>
<feature type="helix" evidence="29">
    <location>
        <begin position="213"/>
        <end position="225"/>
    </location>
</feature>
<feature type="helix" evidence="31">
    <location>
        <begin position="236"/>
        <end position="238"/>
    </location>
</feature>
<feature type="strand" evidence="29">
    <location>
        <begin position="239"/>
        <end position="243"/>
    </location>
</feature>
<feature type="turn" evidence="33">
    <location>
        <begin position="244"/>
        <end position="247"/>
    </location>
</feature>
<feature type="strand" evidence="30">
    <location>
        <begin position="248"/>
        <end position="250"/>
    </location>
</feature>
<feature type="strand" evidence="29">
    <location>
        <begin position="252"/>
        <end position="254"/>
    </location>
</feature>
<feature type="helix" evidence="29">
    <location>
        <begin position="256"/>
        <end position="258"/>
    </location>
</feature>
<feature type="helix" evidence="29">
    <location>
        <begin position="260"/>
        <end position="268"/>
    </location>
</feature>
<feature type="strand" evidence="29">
    <location>
        <begin position="273"/>
        <end position="278"/>
    </location>
</feature>
<feature type="helix" evidence="29">
    <location>
        <begin position="279"/>
        <end position="286"/>
    </location>
</feature>
<feature type="helix" evidence="31">
    <location>
        <begin position="316"/>
        <end position="318"/>
    </location>
</feature>
<feature type="strand" evidence="29">
    <location>
        <begin position="321"/>
        <end position="332"/>
    </location>
</feature>
<feature type="strand" evidence="29">
    <location>
        <begin position="339"/>
        <end position="349"/>
    </location>
</feature>
<feature type="strand" evidence="29">
    <location>
        <begin position="352"/>
        <end position="355"/>
    </location>
</feature>
<feature type="strand" evidence="33">
    <location>
        <begin position="366"/>
        <end position="368"/>
    </location>
</feature>
<feature type="strand" evidence="29">
    <location>
        <begin position="370"/>
        <end position="380"/>
    </location>
</feature>
<feature type="helix" evidence="29">
    <location>
        <begin position="381"/>
        <end position="383"/>
    </location>
</feature>
<feature type="strand" evidence="29">
    <location>
        <begin position="389"/>
        <end position="397"/>
    </location>
</feature>
<feature type="strand" evidence="29">
    <location>
        <begin position="416"/>
        <end position="426"/>
    </location>
</feature>
<feature type="strand" evidence="29">
    <location>
        <begin position="430"/>
        <end position="432"/>
    </location>
</feature>
<feature type="strand" evidence="29">
    <location>
        <begin position="435"/>
        <end position="440"/>
    </location>
</feature>
<feature type="strand" evidence="28">
    <location>
        <begin position="455"/>
        <end position="457"/>
    </location>
</feature>
<feature type="turn" evidence="29">
    <location>
        <begin position="465"/>
        <end position="467"/>
    </location>
</feature>
<feature type="strand" evidence="29">
    <location>
        <begin position="470"/>
        <end position="475"/>
    </location>
</feature>
<feature type="strand" evidence="29">
    <location>
        <begin position="479"/>
        <end position="481"/>
    </location>
</feature>
<feature type="helix" evidence="29">
    <location>
        <begin position="488"/>
        <end position="495"/>
    </location>
</feature>
<feature type="helix" evidence="29">
    <location>
        <begin position="505"/>
        <end position="515"/>
    </location>
</feature>
<feature type="strand" evidence="25">
    <location>
        <begin position="517"/>
        <end position="519"/>
    </location>
</feature>
<feature type="helix" evidence="29">
    <location>
        <begin position="525"/>
        <end position="533"/>
    </location>
</feature>
<feature type="helix" evidence="29">
    <location>
        <begin position="535"/>
        <end position="541"/>
    </location>
</feature>
<feature type="helix" evidence="29">
    <location>
        <begin position="543"/>
        <end position="545"/>
    </location>
</feature>
<feature type="helix" evidence="29">
    <location>
        <begin position="546"/>
        <end position="552"/>
    </location>
</feature>
<feature type="helix" evidence="29">
    <location>
        <begin position="558"/>
        <end position="570"/>
    </location>
</feature>
<feature type="helix" evidence="29">
    <location>
        <begin position="576"/>
        <end position="582"/>
    </location>
</feature>
<feature type="helix" evidence="29">
    <location>
        <begin position="590"/>
        <end position="600"/>
    </location>
</feature>
<feature type="helix" evidence="29">
    <location>
        <begin position="605"/>
        <end position="617"/>
    </location>
</feature>
<feature type="helix" evidence="29">
    <location>
        <begin position="618"/>
        <end position="621"/>
    </location>
</feature>
<feature type="strand" evidence="29">
    <location>
        <begin position="623"/>
        <end position="626"/>
    </location>
</feature>
<feature type="helix" evidence="29">
    <location>
        <begin position="628"/>
        <end position="639"/>
    </location>
</feature>
<feature type="helix" evidence="29">
    <location>
        <begin position="641"/>
        <end position="652"/>
    </location>
</feature>
<feature type="turn" evidence="29">
    <location>
        <begin position="653"/>
        <end position="656"/>
    </location>
</feature>
<feature type="turn" evidence="29">
    <location>
        <begin position="658"/>
        <end position="660"/>
    </location>
</feature>
<feature type="helix" evidence="29">
    <location>
        <begin position="661"/>
        <end position="673"/>
    </location>
</feature>
<feature type="helix" evidence="29">
    <location>
        <begin position="676"/>
        <end position="703"/>
    </location>
</feature>
<feature type="strand" evidence="26">
    <location>
        <begin position="704"/>
        <end position="706"/>
    </location>
</feature>
<feature type="helix" evidence="29">
    <location>
        <begin position="708"/>
        <end position="719"/>
    </location>
</feature>
<feature type="helix" evidence="29">
    <location>
        <begin position="722"/>
        <end position="728"/>
    </location>
</feature>
<feature type="strand" evidence="29">
    <location>
        <begin position="729"/>
        <end position="732"/>
    </location>
</feature>
<feature type="strand" evidence="29">
    <location>
        <begin position="739"/>
        <end position="741"/>
    </location>
</feature>
<feature type="helix" evidence="29">
    <location>
        <begin position="746"/>
        <end position="748"/>
    </location>
</feature>
<feature type="strand" evidence="34">
    <location>
        <begin position="753"/>
        <end position="756"/>
    </location>
</feature>
<feature type="strand" evidence="29">
    <location>
        <begin position="759"/>
        <end position="764"/>
    </location>
</feature>
<feature type="helix" evidence="30">
    <location>
        <begin position="770"/>
        <end position="772"/>
    </location>
</feature>
<feature type="strand" evidence="29">
    <location>
        <begin position="774"/>
        <end position="782"/>
    </location>
</feature>
<feature type="helix" evidence="29">
    <location>
        <begin position="785"/>
        <end position="803"/>
    </location>
</feature>
<feature type="strand" evidence="29">
    <location>
        <begin position="815"/>
        <end position="819"/>
    </location>
</feature>
<feature type="strand" evidence="29">
    <location>
        <begin position="822"/>
        <end position="826"/>
    </location>
</feature>
<feature type="strand" evidence="29">
    <location>
        <begin position="829"/>
        <end position="833"/>
    </location>
</feature>
<feature type="helix" evidence="29">
    <location>
        <begin position="834"/>
        <end position="839"/>
    </location>
</feature>
<feature type="helix" evidence="29">
    <location>
        <begin position="854"/>
        <end position="862"/>
    </location>
</feature>
<feature type="helix" evidence="29">
    <location>
        <begin position="865"/>
        <end position="867"/>
    </location>
</feature>
<feature type="helix" evidence="29">
    <location>
        <begin position="868"/>
        <end position="889"/>
    </location>
</feature>
<feature type="turn" evidence="29">
    <location>
        <begin position="896"/>
        <end position="898"/>
    </location>
</feature>
<feature type="strand" evidence="29">
    <location>
        <begin position="899"/>
        <end position="902"/>
    </location>
</feature>
<feature type="strand" evidence="29">
    <location>
        <begin position="907"/>
        <end position="909"/>
    </location>
</feature>
<feature type="helix" evidence="29">
    <location>
        <begin position="936"/>
        <end position="942"/>
    </location>
</feature>
<feature type="turn" evidence="29">
    <location>
        <begin position="943"/>
        <end position="945"/>
    </location>
</feature>
<feature type="helix" evidence="29">
    <location>
        <begin position="950"/>
        <end position="969"/>
    </location>
</feature>
<feature type="helix" evidence="29">
    <location>
        <begin position="971"/>
        <end position="981"/>
    </location>
</feature>
<feature type="helix" evidence="29">
    <location>
        <begin position="982"/>
        <end position="984"/>
    </location>
</feature>
<feature type="strand" evidence="26">
    <location>
        <begin position="989"/>
        <end position="991"/>
    </location>
</feature>
<feature type="helix" evidence="29">
    <location>
        <begin position="992"/>
        <end position="1001"/>
    </location>
</feature>
<feature type="turn" evidence="29">
    <location>
        <begin position="1002"/>
        <end position="1005"/>
    </location>
</feature>
<feature type="helix" evidence="29">
    <location>
        <begin position="1008"/>
        <end position="1031"/>
    </location>
</feature>
<dbReference type="EC" id="2.7.1.137" evidence="16"/>
<dbReference type="EC" id="2.7.1.153" evidence="9"/>
<dbReference type="EMBL" id="Y10055">
    <property type="protein sequence ID" value="CAA71149.2"/>
    <property type="molecule type" value="mRNA"/>
</dbReference>
<dbReference type="EMBL" id="U86453">
    <property type="protein sequence ID" value="AAC25677.1"/>
    <property type="molecule type" value="mRNA"/>
</dbReference>
<dbReference type="EMBL" id="JN190435">
    <property type="protein sequence ID" value="AEK81610.1"/>
    <property type="molecule type" value="mRNA"/>
</dbReference>
<dbReference type="EMBL" id="DQ263594">
    <property type="protein sequence ID" value="ABB83814.1"/>
    <property type="molecule type" value="mRNA"/>
</dbReference>
<dbReference type="EMBL" id="AL691449">
    <property type="status" value="NOT_ANNOTATED_CDS"/>
    <property type="molecule type" value="Genomic_DNA"/>
</dbReference>
<dbReference type="EMBL" id="BC132919">
    <property type="protein sequence ID" value="AAI32920.1"/>
    <property type="molecule type" value="mRNA"/>
</dbReference>
<dbReference type="EMBL" id="BC132921">
    <property type="protein sequence ID" value="AAI32922.1"/>
    <property type="molecule type" value="mRNA"/>
</dbReference>
<dbReference type="CCDS" id="CCDS104.1">
    <molecule id="O00329-1"/>
</dbReference>
<dbReference type="RefSeq" id="NP_005017.3">
    <molecule id="O00329-1"/>
    <property type="nucleotide sequence ID" value="NM_005026.3"/>
</dbReference>
<dbReference type="RefSeq" id="XP_006710750.1">
    <molecule id="O00329-1"/>
    <property type="nucleotide sequence ID" value="XM_006710687.3"/>
</dbReference>
<dbReference type="RefSeq" id="XP_006710752.1">
    <molecule id="O00329-1"/>
    <property type="nucleotide sequence ID" value="XM_006710689.3"/>
</dbReference>
<dbReference type="RefSeq" id="XP_047278506.1">
    <molecule id="O00329-1"/>
    <property type="nucleotide sequence ID" value="XM_047422550.1"/>
</dbReference>
<dbReference type="RefSeq" id="XP_047278507.1">
    <molecule id="O00329-1"/>
    <property type="nucleotide sequence ID" value="XM_047422551.1"/>
</dbReference>
<dbReference type="RefSeq" id="XP_047278508.1">
    <molecule id="O00329-1"/>
    <property type="nucleotide sequence ID" value="XM_047422552.1"/>
</dbReference>
<dbReference type="RefSeq" id="XP_047278509.1">
    <molecule id="O00329-1"/>
    <property type="nucleotide sequence ID" value="XM_047422553.1"/>
</dbReference>
<dbReference type="RefSeq" id="XP_047278510.1">
    <molecule id="O00329-1"/>
    <property type="nucleotide sequence ID" value="XM_047422554.1"/>
</dbReference>
<dbReference type="RefSeq" id="XP_047278511.1">
    <molecule id="O00329-1"/>
    <property type="nucleotide sequence ID" value="XM_047422555.1"/>
</dbReference>
<dbReference type="RefSeq" id="XP_047278512.1">
    <molecule id="O00329-1"/>
    <property type="nucleotide sequence ID" value="XM_047422556.1"/>
</dbReference>
<dbReference type="RefSeq" id="XP_047278513.1">
    <molecule id="O00329-1"/>
    <property type="nucleotide sequence ID" value="XM_047422557.1"/>
</dbReference>
<dbReference type="RefSeq" id="XP_047278514.1">
    <molecule id="O00329-1"/>
    <property type="nucleotide sequence ID" value="XM_047422558.1"/>
</dbReference>
<dbReference type="RefSeq" id="XP_047278515.1">
    <molecule id="O00329-1"/>
    <property type="nucleotide sequence ID" value="XM_047422559.1"/>
</dbReference>
<dbReference type="RefSeq" id="XP_047278516.1">
    <molecule id="O00329-1"/>
    <property type="nucleotide sequence ID" value="XM_047422560.1"/>
</dbReference>
<dbReference type="PDB" id="5DXU">
    <property type="method" value="X-ray"/>
    <property type="resolution" value="2.64 A"/>
    <property type="chains" value="A=2-1044"/>
</dbReference>
<dbReference type="PDB" id="5M6U">
    <property type="method" value="X-ray"/>
    <property type="resolution" value="2.85 A"/>
    <property type="chains" value="A=17-1027"/>
</dbReference>
<dbReference type="PDB" id="5T8F">
    <property type="method" value="X-ray"/>
    <property type="resolution" value="2.91 A"/>
    <property type="chains" value="A=17-1031"/>
</dbReference>
<dbReference type="PDB" id="5UBT">
    <property type="method" value="X-ray"/>
    <property type="resolution" value="2.83 A"/>
    <property type="chains" value="A=17-1029"/>
</dbReference>
<dbReference type="PDB" id="5VLR">
    <property type="method" value="X-ray"/>
    <property type="resolution" value="2.80 A"/>
    <property type="chains" value="A=17-1029"/>
</dbReference>
<dbReference type="PDB" id="6G6W">
    <property type="method" value="X-ray"/>
    <property type="resolution" value="2.72 A"/>
    <property type="chains" value="A=1-1044"/>
</dbReference>
<dbReference type="PDB" id="6OCO">
    <property type="method" value="X-ray"/>
    <property type="resolution" value="2.58 A"/>
    <property type="chains" value="A=17-1031"/>
</dbReference>
<dbReference type="PDB" id="6OCU">
    <property type="method" value="X-ray"/>
    <property type="resolution" value="2.77 A"/>
    <property type="chains" value="A=1-1044"/>
</dbReference>
<dbReference type="PDB" id="6PYR">
    <property type="method" value="X-ray"/>
    <property type="resolution" value="2.21 A"/>
    <property type="chains" value="A=17-1034"/>
</dbReference>
<dbReference type="PDB" id="6PYU">
    <property type="method" value="X-ray"/>
    <property type="resolution" value="2.54 A"/>
    <property type="chains" value="A=17-1034"/>
</dbReference>
<dbReference type="PDB" id="7JIS">
    <property type="method" value="X-ray"/>
    <property type="resolution" value="2.42 A"/>
    <property type="chains" value="A=17-1034"/>
</dbReference>
<dbReference type="PDB" id="7LM2">
    <property type="method" value="X-ray"/>
    <property type="resolution" value="2.79 A"/>
    <property type="chains" value="A=12-1031"/>
</dbReference>
<dbReference type="PDB" id="7LQ1">
    <property type="method" value="X-ray"/>
    <property type="resolution" value="2.96 A"/>
    <property type="chains" value="A=1-1044"/>
</dbReference>
<dbReference type="PDB" id="8BCY">
    <property type="method" value="X-ray"/>
    <property type="resolution" value="2.43 A"/>
    <property type="chains" value="A=17-1034"/>
</dbReference>
<dbReference type="PDB" id="8S3R">
    <property type="method" value="X-ray"/>
    <property type="resolution" value="2.28 A"/>
    <property type="chains" value="A=17-1034"/>
</dbReference>
<dbReference type="PDB" id="9GCF">
    <property type="method" value="X-ray"/>
    <property type="resolution" value="2.89 A"/>
    <property type="chains" value="A=1-1044"/>
</dbReference>
<dbReference type="PDB" id="9GDI">
    <property type="method" value="X-ray"/>
    <property type="resolution" value="2.81 A"/>
    <property type="chains" value="A=1-1044"/>
</dbReference>
<dbReference type="PDBsum" id="5DXU"/>
<dbReference type="PDBsum" id="5M6U"/>
<dbReference type="PDBsum" id="5T8F"/>
<dbReference type="PDBsum" id="5UBT"/>
<dbReference type="PDBsum" id="5VLR"/>
<dbReference type="PDBsum" id="6G6W"/>
<dbReference type="PDBsum" id="6OCO"/>
<dbReference type="PDBsum" id="6OCU"/>
<dbReference type="PDBsum" id="6PYR"/>
<dbReference type="PDBsum" id="6PYU"/>
<dbReference type="PDBsum" id="7JIS"/>
<dbReference type="PDBsum" id="7LM2"/>
<dbReference type="PDBsum" id="7LQ1"/>
<dbReference type="PDBsum" id="8BCY"/>
<dbReference type="PDBsum" id="8S3R"/>
<dbReference type="PDBsum" id="9GCF"/>
<dbReference type="PDBsum" id="9GDI"/>
<dbReference type="SMR" id="O00329"/>
<dbReference type="BioGRID" id="111311">
    <property type="interactions" value="21"/>
</dbReference>
<dbReference type="ComplexPortal" id="CPX-5978">
    <property type="entry name" value="Phosphatidylinositol 3-kinase complex class IA, p110delta/p55gamma"/>
</dbReference>
<dbReference type="ComplexPortal" id="CPX-5980">
    <property type="entry name" value="Phosphatidylinositol 3-kinase complex class IA, p110delta/p85beta"/>
</dbReference>
<dbReference type="ComplexPortal" id="CPX-5983">
    <property type="entry name" value="Phosphatidylinositol 3-kinase complex class IA, p110delta/p85alpha"/>
</dbReference>
<dbReference type="ComplexPortal" id="CPX-5984">
    <property type="entry name" value="Phosphatidylinositol 3-kinase complex class IA, p110delta/p55alpha"/>
</dbReference>
<dbReference type="ComplexPortal" id="CPX-5985">
    <property type="entry name" value="Phosphatidylinositol 3-kinase complex class IA, p110delta/p50alpha"/>
</dbReference>
<dbReference type="CORUM" id="O00329"/>
<dbReference type="FunCoup" id="O00329">
    <property type="interactions" value="2347"/>
</dbReference>
<dbReference type="IntAct" id="O00329">
    <property type="interactions" value="13"/>
</dbReference>
<dbReference type="MINT" id="O00329"/>
<dbReference type="STRING" id="9606.ENSP00000366563"/>
<dbReference type="BindingDB" id="O00329"/>
<dbReference type="ChEMBL" id="CHEMBL3130"/>
<dbReference type="DrugBank" id="DB06831">
    <property type="generic name" value="2-((9H-PURIN-6-YLTHIO)METHYL)-5-CHLORO-3-(2-METHOXYPHENYL)QUINAZOLIN-4(3H)-ONE"/>
</dbReference>
<dbReference type="DrugBank" id="DB15407">
    <property type="generic name" value="Acalisib"/>
</dbReference>
<dbReference type="DrugBank" id="DB16879">
    <property type="generic name" value="AMG-319"/>
</dbReference>
<dbReference type="DrugBank" id="DB11666">
    <property type="generic name" value="Buparlisib"/>
</dbReference>
<dbReference type="DrugBank" id="DB00201">
    <property type="generic name" value="Caffeine"/>
</dbReference>
<dbReference type="DrugBank" id="DB13051">
    <property type="generic name" value="CH-5132799"/>
</dbReference>
<dbReference type="DrugBank" id="DB12483">
    <property type="generic name" value="Copanlisib"/>
</dbReference>
<dbReference type="DrugBank" id="DB16137">
    <property type="generic name" value="Dezapelisib"/>
</dbReference>
<dbReference type="DrugBank" id="DB11952">
    <property type="generic name" value="Duvelisib"/>
</dbReference>
<dbReference type="DrugBank" id="DB12010">
    <property type="generic name" value="Fostamatinib"/>
</dbReference>
<dbReference type="DrugBank" id="DB09054">
    <property type="generic name" value="Idelalisib"/>
</dbReference>
<dbReference type="DrugBank" id="DB16217">
    <property type="generic name" value="Leniolisib"/>
</dbReference>
<dbReference type="DrugBank" id="DB14867">
    <property type="generic name" value="Parsaclisib"/>
</dbReference>
<dbReference type="DrugBank" id="DB15295">
    <property type="generic name" value="Tenalisib"/>
</dbReference>
<dbReference type="DrugBank" id="DB05552">
    <property type="generic name" value="TG100-115"/>
</dbReference>
<dbReference type="DrugBank" id="DB14989">
    <property type="generic name" value="Umbralisib"/>
</dbReference>
<dbReference type="DrugBank" id="DB08059">
    <property type="generic name" value="Wortmannin"/>
</dbReference>
<dbReference type="DrugBank" id="DB05241">
    <property type="generic name" value="XL765"/>
</dbReference>
<dbReference type="DrugCentral" id="O00329"/>
<dbReference type="GuidetoPHARMACOLOGY" id="2155"/>
<dbReference type="SwissLipids" id="SLP:000000908"/>
<dbReference type="GlyCosmos" id="O00329">
    <property type="glycosylation" value="1 site, 1 glycan"/>
</dbReference>
<dbReference type="GlyGen" id="O00329">
    <property type="glycosylation" value="2 sites, 1 O-linked glycan (1 site)"/>
</dbReference>
<dbReference type="iPTMnet" id="O00329"/>
<dbReference type="PhosphoSitePlus" id="O00329"/>
<dbReference type="BioMuta" id="PIK3CD"/>
<dbReference type="CPTAC" id="CPTAC-1213"/>
<dbReference type="CPTAC" id="CPTAC-3075"/>
<dbReference type="jPOST" id="O00329"/>
<dbReference type="MassIVE" id="O00329"/>
<dbReference type="PaxDb" id="9606-ENSP00000366563"/>
<dbReference type="PeptideAtlas" id="O00329"/>
<dbReference type="ProteomicsDB" id="47850">
    <molecule id="O00329-1"/>
</dbReference>
<dbReference type="Pumba" id="O00329"/>
<dbReference type="Antibodypedia" id="4215">
    <property type="antibodies" value="594 antibodies from 39 providers"/>
</dbReference>
<dbReference type="DNASU" id="5293"/>
<dbReference type="Ensembl" id="ENST00000377346.9">
    <molecule id="O00329-1"/>
    <property type="protein sequence ID" value="ENSP00000366563.4"/>
    <property type="gene ID" value="ENSG00000171608.18"/>
</dbReference>
<dbReference type="Ensembl" id="ENST00000481137.2">
    <molecule id="O00329-2"/>
    <property type="protein sequence ID" value="ENSP00000513886.1"/>
    <property type="gene ID" value="ENSG00000171608.18"/>
</dbReference>
<dbReference type="Ensembl" id="ENST00000698712.1">
    <molecule id="O00329-1"/>
    <property type="protein sequence ID" value="ENSP00000513889.1"/>
    <property type="gene ID" value="ENSG00000171608.18"/>
</dbReference>
<dbReference type="Ensembl" id="ENST00000698713.1">
    <molecule id="O00329-1"/>
    <property type="protein sequence ID" value="ENSP00000513890.1"/>
    <property type="gene ID" value="ENSG00000171608.18"/>
</dbReference>
<dbReference type="GeneID" id="5293"/>
<dbReference type="KEGG" id="hsa:5293"/>
<dbReference type="MANE-Select" id="ENST00000377346.9">
    <property type="protein sequence ID" value="ENSP00000366563.4"/>
    <property type="RefSeq nucleotide sequence ID" value="NM_005026.5"/>
    <property type="RefSeq protein sequence ID" value="NP_005017.3"/>
</dbReference>
<dbReference type="UCSC" id="uc001aqb.5">
    <molecule id="O00329-1"/>
    <property type="organism name" value="human"/>
</dbReference>
<dbReference type="AGR" id="HGNC:8977"/>
<dbReference type="CTD" id="5293"/>
<dbReference type="DisGeNET" id="5293"/>
<dbReference type="GeneCards" id="PIK3CD"/>
<dbReference type="GeneReviews" id="PIK3CD"/>
<dbReference type="HGNC" id="HGNC:8977">
    <property type="gene designation" value="PIK3CD"/>
</dbReference>
<dbReference type="HPA" id="ENSG00000171608">
    <property type="expression patterns" value="Group enriched (bone marrow, intestine, lymphoid tissue)"/>
</dbReference>
<dbReference type="MalaCards" id="PIK3CD"/>
<dbReference type="MIM" id="602839">
    <property type="type" value="gene"/>
</dbReference>
<dbReference type="MIM" id="613328">
    <property type="type" value="phenotype"/>
</dbReference>
<dbReference type="MIM" id="615513">
    <property type="type" value="phenotype"/>
</dbReference>
<dbReference type="MIM" id="619281">
    <property type="type" value="phenotype"/>
</dbReference>
<dbReference type="neXtProt" id="NX_O00329"/>
<dbReference type="OpenTargets" id="ENSG00000171608"/>
<dbReference type="Orphanet" id="397596">
    <property type="disease" value="Activated PI3K-delta syndrome"/>
</dbReference>
<dbReference type="Orphanet" id="33110">
    <property type="disease" value="Autosomal non-syndromic agammaglobulinemia"/>
</dbReference>
<dbReference type="Orphanet" id="221139">
    <property type="disease" value="Combined immunodeficiency with facio-oculo-skeletal anomalies"/>
</dbReference>
<dbReference type="PharmGKB" id="PA33310"/>
<dbReference type="VEuPathDB" id="HostDB:ENSG00000171608"/>
<dbReference type="eggNOG" id="KOG0904">
    <property type="taxonomic scope" value="Eukaryota"/>
</dbReference>
<dbReference type="GeneTree" id="ENSGT00940000159079"/>
<dbReference type="InParanoid" id="O00329"/>
<dbReference type="OMA" id="CCEPQIT"/>
<dbReference type="OrthoDB" id="67688at2759"/>
<dbReference type="PAN-GO" id="O00329">
    <property type="GO annotations" value="8 GO annotations based on evolutionary models"/>
</dbReference>
<dbReference type="PhylomeDB" id="O00329"/>
<dbReference type="TreeFam" id="TF102031"/>
<dbReference type="BioCyc" id="MetaCyc:ENSG00000171608-MONOMER"/>
<dbReference type="BRENDA" id="2.7.1.137">
    <property type="organism ID" value="2681"/>
</dbReference>
<dbReference type="BRENDA" id="2.7.1.153">
    <property type="organism ID" value="2681"/>
</dbReference>
<dbReference type="BRENDA" id="2.7.11.1">
    <property type="organism ID" value="2681"/>
</dbReference>
<dbReference type="PathwayCommons" id="O00329"/>
<dbReference type="Reactome" id="R-HSA-1257604">
    <property type="pathway name" value="PIP3 activates AKT signaling"/>
</dbReference>
<dbReference type="Reactome" id="R-HSA-1660499">
    <property type="pathway name" value="Synthesis of PIPs at the plasma membrane"/>
</dbReference>
<dbReference type="Reactome" id="R-HSA-2219530">
    <property type="pathway name" value="Constitutive Signaling by Aberrant PI3K in Cancer"/>
</dbReference>
<dbReference type="Reactome" id="R-HSA-389357">
    <property type="pathway name" value="CD28 dependent PI3K/Akt signaling"/>
</dbReference>
<dbReference type="Reactome" id="R-HSA-512988">
    <property type="pathway name" value="Interleukin-3, Interleukin-5 and GM-CSF signaling"/>
</dbReference>
<dbReference type="Reactome" id="R-HSA-6811558">
    <property type="pathway name" value="PI5P, PP2A and IER3 Regulate PI3K/AKT Signaling"/>
</dbReference>
<dbReference type="Reactome" id="R-HSA-8853659">
    <property type="pathway name" value="RET signaling"/>
</dbReference>
<dbReference type="Reactome" id="R-HSA-9027276">
    <property type="pathway name" value="Erythropoietin activates Phosphoinositide-3-kinase (PI3K)"/>
</dbReference>
<dbReference type="Reactome" id="R-HSA-912526">
    <property type="pathway name" value="Interleukin receptor SHC signaling"/>
</dbReference>
<dbReference type="Reactome" id="R-HSA-912631">
    <property type="pathway name" value="Regulation of signaling by CBL"/>
</dbReference>
<dbReference type="Reactome" id="R-HSA-9680350">
    <property type="pathway name" value="Signaling by CSF1 (M-CSF) in myeloid cells"/>
</dbReference>
<dbReference type="Reactome" id="R-HSA-983695">
    <property type="pathway name" value="Antigen activates B Cell Receptor (BCR) leading to generation of second messengers"/>
</dbReference>
<dbReference type="Reactome" id="R-HSA-9856530">
    <property type="pathway name" value="High laminar flow shear stress activates signaling by PIEZO1 and PECAM1:CDH5:KDR in endothelial cells"/>
</dbReference>
<dbReference type="Reactome" id="R-HSA-9927354">
    <property type="pathway name" value="Co-stimulation by ICOS"/>
</dbReference>
<dbReference type="SignaLink" id="O00329"/>
<dbReference type="SIGNOR" id="O00329"/>
<dbReference type="UniPathway" id="UPA00220"/>
<dbReference type="BioGRID-ORCS" id="5293">
    <property type="hits" value="24 hits in 1165 CRISPR screens"/>
</dbReference>
<dbReference type="ChiTaRS" id="PIK3CD">
    <property type="organism name" value="human"/>
</dbReference>
<dbReference type="GeneWiki" id="P110%CE%B4"/>
<dbReference type="GenomeRNAi" id="5293"/>
<dbReference type="Pharos" id="O00329">
    <property type="development level" value="Tclin"/>
</dbReference>
<dbReference type="PRO" id="PR:O00329"/>
<dbReference type="Proteomes" id="UP000005640">
    <property type="component" value="Chromosome 1"/>
</dbReference>
<dbReference type="RNAct" id="O00329">
    <property type="molecule type" value="protein"/>
</dbReference>
<dbReference type="Bgee" id="ENSG00000171608">
    <property type="expression patterns" value="Expressed in granulocyte and 183 other cell types or tissues"/>
</dbReference>
<dbReference type="ExpressionAtlas" id="O00329">
    <property type="expression patterns" value="baseline and differential"/>
</dbReference>
<dbReference type="GO" id="GO:0005737">
    <property type="term" value="C:cytoplasm"/>
    <property type="evidence" value="ECO:0000318"/>
    <property type="project" value="GO_Central"/>
</dbReference>
<dbReference type="GO" id="GO:0005829">
    <property type="term" value="C:cytosol"/>
    <property type="evidence" value="ECO:0000304"/>
    <property type="project" value="Reactome"/>
</dbReference>
<dbReference type="GO" id="GO:0005942">
    <property type="term" value="C:phosphatidylinositol 3-kinase complex"/>
    <property type="evidence" value="ECO:0000318"/>
    <property type="project" value="GO_Central"/>
</dbReference>
<dbReference type="GO" id="GO:0005943">
    <property type="term" value="C:phosphatidylinositol 3-kinase complex, class IA"/>
    <property type="evidence" value="ECO:0000353"/>
    <property type="project" value="ComplexPortal"/>
</dbReference>
<dbReference type="GO" id="GO:0005886">
    <property type="term" value="C:plasma membrane"/>
    <property type="evidence" value="ECO:0000318"/>
    <property type="project" value="GO_Central"/>
</dbReference>
<dbReference type="GO" id="GO:0016303">
    <property type="term" value="F:1-phosphatidylinositol-3-kinase activity"/>
    <property type="evidence" value="ECO:0000318"/>
    <property type="project" value="GO_Central"/>
</dbReference>
<dbReference type="GO" id="GO:0046934">
    <property type="term" value="F:1-phosphatidylinositol-4,5-bisphosphate 3-kinase activity"/>
    <property type="evidence" value="ECO:0000304"/>
    <property type="project" value="Reactome"/>
</dbReference>
<dbReference type="GO" id="GO:0035005">
    <property type="term" value="F:1-phosphatidylinositol-4-phosphate 3-kinase activity"/>
    <property type="evidence" value="ECO:0000318"/>
    <property type="project" value="GO_Central"/>
</dbReference>
<dbReference type="GO" id="GO:0005524">
    <property type="term" value="F:ATP binding"/>
    <property type="evidence" value="ECO:0007669"/>
    <property type="project" value="UniProtKB-KW"/>
</dbReference>
<dbReference type="GO" id="GO:0002250">
    <property type="term" value="P:adaptive immune response"/>
    <property type="evidence" value="ECO:0000304"/>
    <property type="project" value="UniProtKB"/>
</dbReference>
<dbReference type="GO" id="GO:0042113">
    <property type="term" value="P:B cell activation"/>
    <property type="evidence" value="ECO:0000304"/>
    <property type="project" value="UniProtKB"/>
</dbReference>
<dbReference type="GO" id="GO:0035754">
    <property type="term" value="P:B cell chemotaxis"/>
    <property type="evidence" value="ECO:0000304"/>
    <property type="project" value="UniProtKB"/>
</dbReference>
<dbReference type="GO" id="GO:0030183">
    <property type="term" value="P:B cell differentiation"/>
    <property type="evidence" value="ECO:0000303"/>
    <property type="project" value="ComplexPortal"/>
</dbReference>
<dbReference type="GO" id="GO:0050853">
    <property type="term" value="P:B cell receptor signaling pathway"/>
    <property type="evidence" value="ECO:0000304"/>
    <property type="project" value="UniProtKB"/>
</dbReference>
<dbReference type="GO" id="GO:0016477">
    <property type="term" value="P:cell migration"/>
    <property type="evidence" value="ECO:0000318"/>
    <property type="project" value="GO_Central"/>
</dbReference>
<dbReference type="GO" id="GO:0006955">
    <property type="term" value="P:immune response"/>
    <property type="evidence" value="ECO:0000303"/>
    <property type="project" value="ComplexPortal"/>
</dbReference>
<dbReference type="GO" id="GO:0006954">
    <property type="term" value="P:inflammatory response"/>
    <property type="evidence" value="ECO:0000304"/>
    <property type="project" value="UniProtKB"/>
</dbReference>
<dbReference type="GO" id="GO:0045087">
    <property type="term" value="P:innate immune response"/>
    <property type="evidence" value="ECO:0000304"/>
    <property type="project" value="UniProtKB"/>
</dbReference>
<dbReference type="GO" id="GO:0002551">
    <property type="term" value="P:mast cell chemotaxis"/>
    <property type="evidence" value="ECO:0000304"/>
    <property type="project" value="UniProtKB"/>
</dbReference>
<dbReference type="GO" id="GO:0043303">
    <property type="term" value="P:mast cell degranulation"/>
    <property type="evidence" value="ECO:0000304"/>
    <property type="project" value="UniProtKB"/>
</dbReference>
<dbReference type="GO" id="GO:0060374">
    <property type="term" value="P:mast cell differentiation"/>
    <property type="evidence" value="ECO:0000304"/>
    <property type="project" value="UniProtKB"/>
</dbReference>
<dbReference type="GO" id="GO:0030101">
    <property type="term" value="P:natural killer cell activation"/>
    <property type="evidence" value="ECO:0000304"/>
    <property type="project" value="UniProtKB"/>
</dbReference>
<dbReference type="GO" id="GO:0035747">
    <property type="term" value="P:natural killer cell chemotaxis"/>
    <property type="evidence" value="ECO:0000304"/>
    <property type="project" value="UniProtKB"/>
</dbReference>
<dbReference type="GO" id="GO:0001779">
    <property type="term" value="P:natural killer cell differentiation"/>
    <property type="evidence" value="ECO:0000304"/>
    <property type="project" value="UniProtKB"/>
</dbReference>
<dbReference type="GO" id="GO:0030593">
    <property type="term" value="P:neutrophil chemotaxis"/>
    <property type="evidence" value="ECO:0000304"/>
    <property type="project" value="UniProtKB"/>
</dbReference>
<dbReference type="GO" id="GO:0072672">
    <property type="term" value="P:neutrophil extravasation"/>
    <property type="evidence" value="ECO:0000304"/>
    <property type="project" value="UniProtKB"/>
</dbReference>
<dbReference type="GO" id="GO:0043491">
    <property type="term" value="P:phosphatidylinositol 3-kinase/protein kinase B signal transduction"/>
    <property type="evidence" value="ECO:0000315"/>
    <property type="project" value="CAFA"/>
</dbReference>
<dbReference type="GO" id="GO:0036092">
    <property type="term" value="P:phosphatidylinositol-3-phosphate biosynthetic process"/>
    <property type="evidence" value="ECO:0000318"/>
    <property type="project" value="GO_Central"/>
</dbReference>
<dbReference type="GO" id="GO:0048015">
    <property type="term" value="P:phosphatidylinositol-mediated signaling"/>
    <property type="evidence" value="ECO:0000318"/>
    <property type="project" value="GO_Central"/>
</dbReference>
<dbReference type="GO" id="GO:0045766">
    <property type="term" value="P:positive regulation of angiogenesis"/>
    <property type="evidence" value="ECO:0000250"/>
    <property type="project" value="BHF-UCL"/>
</dbReference>
<dbReference type="GO" id="GO:0030335">
    <property type="term" value="P:positive regulation of cell migration"/>
    <property type="evidence" value="ECO:0000315"/>
    <property type="project" value="CACAO"/>
</dbReference>
<dbReference type="GO" id="GO:0001819">
    <property type="term" value="P:positive regulation of cytokine production"/>
    <property type="evidence" value="ECO:0000304"/>
    <property type="project" value="UniProtKB"/>
</dbReference>
<dbReference type="GO" id="GO:0010595">
    <property type="term" value="P:positive regulation of endothelial cell migration"/>
    <property type="evidence" value="ECO:0000316"/>
    <property type="project" value="BHF-UCL"/>
</dbReference>
<dbReference type="GO" id="GO:0001938">
    <property type="term" value="P:positive regulation of endothelial cell proliferation"/>
    <property type="evidence" value="ECO:0000316"/>
    <property type="project" value="BHF-UCL"/>
</dbReference>
<dbReference type="GO" id="GO:1905278">
    <property type="term" value="P:positive regulation of epithelial tube formation"/>
    <property type="evidence" value="ECO:0000316"/>
    <property type="project" value="BHF-UCL"/>
</dbReference>
<dbReference type="GO" id="GO:0010628">
    <property type="term" value="P:positive regulation of gene expression"/>
    <property type="evidence" value="ECO:0000315"/>
    <property type="project" value="CACAO"/>
</dbReference>
<dbReference type="GO" id="GO:0033031">
    <property type="term" value="P:positive regulation of neutrophil apoptotic process"/>
    <property type="evidence" value="ECO:0000315"/>
    <property type="project" value="CAFA"/>
</dbReference>
<dbReference type="GO" id="GO:0006468">
    <property type="term" value="P:protein phosphorylation"/>
    <property type="evidence" value="ECO:0000303"/>
    <property type="project" value="UniProtKB"/>
</dbReference>
<dbReference type="GO" id="GO:0002679">
    <property type="term" value="P:respiratory burst involved in defense response"/>
    <property type="evidence" value="ECO:0000304"/>
    <property type="project" value="UniProtKB"/>
</dbReference>
<dbReference type="GO" id="GO:0007165">
    <property type="term" value="P:signal transduction"/>
    <property type="evidence" value="ECO:0000303"/>
    <property type="project" value="UniProtKB"/>
</dbReference>
<dbReference type="GO" id="GO:0042110">
    <property type="term" value="P:T cell activation"/>
    <property type="evidence" value="ECO:0000304"/>
    <property type="project" value="UniProtKB"/>
</dbReference>
<dbReference type="GO" id="GO:0010818">
    <property type="term" value="P:T cell chemotaxis"/>
    <property type="evidence" value="ECO:0000304"/>
    <property type="project" value="UniProtKB"/>
</dbReference>
<dbReference type="GO" id="GO:0031295">
    <property type="term" value="P:T cell costimulation"/>
    <property type="evidence" value="ECO:0000304"/>
    <property type="project" value="Reactome"/>
</dbReference>
<dbReference type="GO" id="GO:0030217">
    <property type="term" value="P:T cell differentiation"/>
    <property type="evidence" value="ECO:0000304"/>
    <property type="project" value="UniProtKB"/>
</dbReference>
<dbReference type="GO" id="GO:0050852">
    <property type="term" value="P:T cell receptor signaling pathway"/>
    <property type="evidence" value="ECO:0000304"/>
    <property type="project" value="UniProtKB"/>
</dbReference>
<dbReference type="GO" id="GO:0038084">
    <property type="term" value="P:vascular endothelial growth factor signaling pathway"/>
    <property type="evidence" value="ECO:0000316"/>
    <property type="project" value="BHF-UCL"/>
</dbReference>
<dbReference type="CDD" id="cd08693">
    <property type="entry name" value="C2_PI3K_class_I_beta_delta"/>
    <property type="match status" value="1"/>
</dbReference>
<dbReference type="CDD" id="cd05174">
    <property type="entry name" value="PI3Kc_IA_delta"/>
    <property type="match status" value="1"/>
</dbReference>
<dbReference type="FunFam" id="1.10.1070.11:FF:000001">
    <property type="entry name" value="Phosphatidylinositol 4,5-bisphosphate 3-kinase catalytic subunit"/>
    <property type="match status" value="1"/>
</dbReference>
<dbReference type="FunFam" id="1.25.40.70:FF:000008">
    <property type="entry name" value="Phosphatidylinositol 4,5-bisphosphate 3-kinase catalytic subunit"/>
    <property type="match status" value="1"/>
</dbReference>
<dbReference type="FunFam" id="2.60.40.150:FF:000046">
    <property type="entry name" value="Phosphatidylinositol 4,5-bisphosphate 3-kinase catalytic subunit"/>
    <property type="match status" value="1"/>
</dbReference>
<dbReference type="FunFam" id="3.10.20.770:FF:000002">
    <property type="entry name" value="Phosphatidylinositol 4,5-bisphosphate 3-kinase catalytic subunit"/>
    <property type="match status" value="1"/>
</dbReference>
<dbReference type="FunFam" id="3.30.1010.10:FF:000005">
    <property type="entry name" value="Phosphatidylinositol 4,5-bisphosphate 3-kinase catalytic subunit beta"/>
    <property type="match status" value="1"/>
</dbReference>
<dbReference type="Gene3D" id="3.10.20.770">
    <property type="match status" value="1"/>
</dbReference>
<dbReference type="Gene3D" id="2.60.40.150">
    <property type="entry name" value="C2 domain"/>
    <property type="match status" value="1"/>
</dbReference>
<dbReference type="Gene3D" id="1.10.1070.11">
    <property type="entry name" value="Phosphatidylinositol 3-/4-kinase, catalytic domain"/>
    <property type="match status" value="1"/>
</dbReference>
<dbReference type="Gene3D" id="3.30.1010.10">
    <property type="entry name" value="Phosphatidylinositol 3-kinase Catalytic Subunit, Chain A, domain 4"/>
    <property type="match status" value="1"/>
</dbReference>
<dbReference type="Gene3D" id="1.25.40.70">
    <property type="entry name" value="Phosphatidylinositol 3-kinase, accessory domain (PIK)"/>
    <property type="match status" value="1"/>
</dbReference>
<dbReference type="InterPro" id="IPR016024">
    <property type="entry name" value="ARM-type_fold"/>
</dbReference>
<dbReference type="InterPro" id="IPR035892">
    <property type="entry name" value="C2_domain_sf"/>
</dbReference>
<dbReference type="InterPro" id="IPR011009">
    <property type="entry name" value="Kinase-like_dom_sf"/>
</dbReference>
<dbReference type="InterPro" id="IPR000403">
    <property type="entry name" value="PI3/4_kinase_cat_dom"/>
</dbReference>
<dbReference type="InterPro" id="IPR036940">
    <property type="entry name" value="PI3/4_kinase_cat_sf"/>
</dbReference>
<dbReference type="InterPro" id="IPR018936">
    <property type="entry name" value="PI3/4_kinase_CS"/>
</dbReference>
<dbReference type="InterPro" id="IPR002420">
    <property type="entry name" value="PI3K-type_C2_dom"/>
</dbReference>
<dbReference type="InterPro" id="IPR003113">
    <property type="entry name" value="PI3K_ABD"/>
</dbReference>
<dbReference type="InterPro" id="IPR001263">
    <property type="entry name" value="PI3K_accessory_dom"/>
</dbReference>
<dbReference type="InterPro" id="IPR042236">
    <property type="entry name" value="PI3K_accessory_sf"/>
</dbReference>
<dbReference type="InterPro" id="IPR000341">
    <property type="entry name" value="PI3K_Ras-bd_dom"/>
</dbReference>
<dbReference type="InterPro" id="IPR037703">
    <property type="entry name" value="PI3Kdelta_dom"/>
</dbReference>
<dbReference type="InterPro" id="IPR015433">
    <property type="entry name" value="PI_Kinase"/>
</dbReference>
<dbReference type="InterPro" id="IPR029071">
    <property type="entry name" value="Ubiquitin-like_domsf"/>
</dbReference>
<dbReference type="PANTHER" id="PTHR10048:SF35">
    <property type="entry name" value="PHOSPHATIDYLINOSITOL 4,5-BISPHOSPHATE 3-KINASE CATALYTIC SUBUNIT DELTA ISOFORM"/>
    <property type="match status" value="1"/>
</dbReference>
<dbReference type="PANTHER" id="PTHR10048">
    <property type="entry name" value="PHOSPHATIDYLINOSITOL KINASE"/>
    <property type="match status" value="1"/>
</dbReference>
<dbReference type="Pfam" id="PF00454">
    <property type="entry name" value="PI3_PI4_kinase"/>
    <property type="match status" value="1"/>
</dbReference>
<dbReference type="Pfam" id="PF00792">
    <property type="entry name" value="PI3K_C2"/>
    <property type="match status" value="1"/>
</dbReference>
<dbReference type="Pfam" id="PF02192">
    <property type="entry name" value="PI3K_p85B"/>
    <property type="match status" value="1"/>
</dbReference>
<dbReference type="Pfam" id="PF00794">
    <property type="entry name" value="PI3K_rbd"/>
    <property type="match status" value="1"/>
</dbReference>
<dbReference type="Pfam" id="PF00613">
    <property type="entry name" value="PI3Ka"/>
    <property type="match status" value="1"/>
</dbReference>
<dbReference type="SMART" id="SM00142">
    <property type="entry name" value="PI3K_C2"/>
    <property type="match status" value="1"/>
</dbReference>
<dbReference type="SMART" id="SM00143">
    <property type="entry name" value="PI3K_p85B"/>
    <property type="match status" value="1"/>
</dbReference>
<dbReference type="SMART" id="SM00144">
    <property type="entry name" value="PI3K_rbd"/>
    <property type="match status" value="1"/>
</dbReference>
<dbReference type="SMART" id="SM00145">
    <property type="entry name" value="PI3Ka"/>
    <property type="match status" value="1"/>
</dbReference>
<dbReference type="SMART" id="SM00146">
    <property type="entry name" value="PI3Kc"/>
    <property type="match status" value="1"/>
</dbReference>
<dbReference type="SUPFAM" id="SSF48371">
    <property type="entry name" value="ARM repeat"/>
    <property type="match status" value="1"/>
</dbReference>
<dbReference type="SUPFAM" id="SSF49562">
    <property type="entry name" value="C2 domain (Calcium/lipid-binding domain, CaLB)"/>
    <property type="match status" value="1"/>
</dbReference>
<dbReference type="SUPFAM" id="SSF56112">
    <property type="entry name" value="Protein kinase-like (PK-like)"/>
    <property type="match status" value="1"/>
</dbReference>
<dbReference type="SUPFAM" id="SSF54236">
    <property type="entry name" value="Ubiquitin-like"/>
    <property type="match status" value="1"/>
</dbReference>
<dbReference type="PROSITE" id="PS51547">
    <property type="entry name" value="C2_PI3K"/>
    <property type="match status" value="1"/>
</dbReference>
<dbReference type="PROSITE" id="PS00915">
    <property type="entry name" value="PI3_4_KINASE_1"/>
    <property type="match status" value="1"/>
</dbReference>
<dbReference type="PROSITE" id="PS00916">
    <property type="entry name" value="PI3_4_KINASE_2"/>
    <property type="match status" value="1"/>
</dbReference>
<dbReference type="PROSITE" id="PS50290">
    <property type="entry name" value="PI3_4_KINASE_3"/>
    <property type="match status" value="1"/>
</dbReference>
<dbReference type="PROSITE" id="PS51544">
    <property type="entry name" value="PI3K_ABD"/>
    <property type="match status" value="1"/>
</dbReference>
<dbReference type="PROSITE" id="PS51546">
    <property type="entry name" value="PI3K_RBD"/>
    <property type="match status" value="1"/>
</dbReference>
<dbReference type="PROSITE" id="PS51545">
    <property type="entry name" value="PIK_HELICAL"/>
    <property type="match status" value="1"/>
</dbReference>
<accession>O00329</accession>
<accession>A6NCG0</accession>
<accession>G1FFP1</accession>
<accession>O15445</accession>
<accession>Q5SR49</accession>
<gene>
    <name type="primary">PIK3CD</name>
</gene>
<proteinExistence type="evidence at protein level"/>